<sequence>MPILVVNVDHVATLRQQRLGIEPDPVTAAHMAELAGARGIIVHLREDRRHIQDRDVSLLRQTLKTRLHLEMAATEEMQGIALAEKPHMVCLVPEKREELTTEGGLVVAGRVDFLQAYVKPFHEIGIATSLFIEADPDQIRAAARVGVTHVELHTGHFADAPDAAERKRQRDAIVAGIGLARTLGLKVNLGHGLNYDNIFDFEAVPGICEFSIGHSIVSRAVLTGFGPAVRDMVDIINRFPG</sequence>
<reference key="1">
    <citation type="journal article" date="2004" name="Nat. Biotechnol.">
        <title>The genome sequence of the anaerobic, sulfate-reducing bacterium Desulfovibrio vulgaris Hildenborough.</title>
        <authorList>
            <person name="Heidelberg J.F."/>
            <person name="Seshadri R."/>
            <person name="Haveman S.A."/>
            <person name="Hemme C.L."/>
            <person name="Paulsen I.T."/>
            <person name="Kolonay J.F."/>
            <person name="Eisen J.A."/>
            <person name="Ward N.L."/>
            <person name="Methe B.A."/>
            <person name="Brinkac L.M."/>
            <person name="Daugherty S.C."/>
            <person name="DeBoy R.T."/>
            <person name="Dodson R.J."/>
            <person name="Durkin A.S."/>
            <person name="Madupu R."/>
            <person name="Nelson W.C."/>
            <person name="Sullivan S.A."/>
            <person name="Fouts D.E."/>
            <person name="Haft D.H."/>
            <person name="Selengut J."/>
            <person name="Peterson J.D."/>
            <person name="Davidsen T.M."/>
            <person name="Zafar N."/>
            <person name="Zhou L."/>
            <person name="Radune D."/>
            <person name="Dimitrov G."/>
            <person name="Hance M."/>
            <person name="Tran K."/>
            <person name="Khouri H.M."/>
            <person name="Gill J."/>
            <person name="Utterback T.R."/>
            <person name="Feldblyum T.V."/>
            <person name="Wall J.D."/>
            <person name="Voordouw G."/>
            <person name="Fraser C.M."/>
        </authorList>
    </citation>
    <scope>NUCLEOTIDE SEQUENCE [LARGE SCALE GENOMIC DNA]</scope>
    <source>
        <strain>ATCC 29579 / DSM 644 / CCUG 34227 / NCIMB 8303 / VKM B-1760 / Hildenborough</strain>
    </source>
</reference>
<accession>Q3V891</accession>
<feature type="chain" id="PRO_0000231803" description="Pyridoxine 5'-phosphate synthase">
    <location>
        <begin position="1"/>
        <end position="241"/>
    </location>
</feature>
<feature type="active site" description="Proton acceptor" evidence="1">
    <location>
        <position position="43"/>
    </location>
</feature>
<feature type="active site" description="Proton acceptor" evidence="1">
    <location>
        <position position="70"/>
    </location>
</feature>
<feature type="active site" description="Proton donor" evidence="1">
    <location>
        <position position="191"/>
    </location>
</feature>
<feature type="binding site" evidence="1">
    <location>
        <position position="7"/>
    </location>
    <ligand>
        <name>3-amino-2-oxopropyl phosphate</name>
        <dbReference type="ChEBI" id="CHEBI:57279"/>
    </ligand>
</feature>
<feature type="binding site" evidence="1">
    <location>
        <begin position="9"/>
        <end position="10"/>
    </location>
    <ligand>
        <name>1-deoxy-D-xylulose 5-phosphate</name>
        <dbReference type="ChEBI" id="CHEBI:57792"/>
    </ligand>
</feature>
<feature type="binding site" evidence="1">
    <location>
        <position position="18"/>
    </location>
    <ligand>
        <name>3-amino-2-oxopropyl phosphate</name>
        <dbReference type="ChEBI" id="CHEBI:57279"/>
    </ligand>
</feature>
<feature type="binding site" evidence="1">
    <location>
        <position position="45"/>
    </location>
    <ligand>
        <name>1-deoxy-D-xylulose 5-phosphate</name>
        <dbReference type="ChEBI" id="CHEBI:57792"/>
    </ligand>
</feature>
<feature type="binding site" evidence="1">
    <location>
        <position position="50"/>
    </location>
    <ligand>
        <name>1-deoxy-D-xylulose 5-phosphate</name>
        <dbReference type="ChEBI" id="CHEBI:57792"/>
    </ligand>
</feature>
<feature type="binding site" evidence="1">
    <location>
        <position position="100"/>
    </location>
    <ligand>
        <name>1-deoxy-D-xylulose 5-phosphate</name>
        <dbReference type="ChEBI" id="CHEBI:57792"/>
    </ligand>
</feature>
<feature type="binding site" evidence="1">
    <location>
        <position position="192"/>
    </location>
    <ligand>
        <name>3-amino-2-oxopropyl phosphate</name>
        <dbReference type="ChEBI" id="CHEBI:57279"/>
    </ligand>
</feature>
<feature type="binding site" evidence="1">
    <location>
        <begin position="213"/>
        <end position="214"/>
    </location>
    <ligand>
        <name>3-amino-2-oxopropyl phosphate</name>
        <dbReference type="ChEBI" id="CHEBI:57279"/>
    </ligand>
</feature>
<feature type="site" description="Transition state stabilizer" evidence="1">
    <location>
        <position position="151"/>
    </location>
</feature>
<protein>
    <recommendedName>
        <fullName evidence="1">Pyridoxine 5'-phosphate synthase</fullName>
        <shortName evidence="1">PNP synthase</shortName>
        <ecNumber evidence="1">2.6.99.2</ecNumber>
    </recommendedName>
</protein>
<name>PDXJ_NITV2</name>
<proteinExistence type="evidence at protein level"/>
<keyword id="KW-0963">Cytoplasm</keyword>
<keyword id="KW-0664">Pyridoxine biosynthesis</keyword>
<keyword id="KW-1185">Reference proteome</keyword>
<keyword id="KW-0808">Transferase</keyword>
<comment type="function">
    <text evidence="1">Catalyzes the complicated ring closure reaction between the two acyclic compounds 1-deoxy-D-xylulose-5-phosphate (DXP) and 3-amino-2-oxopropyl phosphate (1-amino-acetone-3-phosphate or AAP) to form pyridoxine 5'-phosphate (PNP) and inorganic phosphate.</text>
</comment>
<comment type="catalytic activity">
    <reaction evidence="1">
        <text>3-amino-2-oxopropyl phosphate + 1-deoxy-D-xylulose 5-phosphate = pyridoxine 5'-phosphate + phosphate + 2 H2O + H(+)</text>
        <dbReference type="Rhea" id="RHEA:15265"/>
        <dbReference type="ChEBI" id="CHEBI:15377"/>
        <dbReference type="ChEBI" id="CHEBI:15378"/>
        <dbReference type="ChEBI" id="CHEBI:43474"/>
        <dbReference type="ChEBI" id="CHEBI:57279"/>
        <dbReference type="ChEBI" id="CHEBI:57792"/>
        <dbReference type="ChEBI" id="CHEBI:58589"/>
        <dbReference type="EC" id="2.6.99.2"/>
    </reaction>
</comment>
<comment type="pathway">
    <text evidence="1">Cofactor biosynthesis; pyridoxine 5'-phosphate biosynthesis; pyridoxine 5'-phosphate from D-erythrose 4-phosphate: step 5/5.</text>
</comment>
<comment type="subunit">
    <text evidence="1">Homooctamer; tetramer of dimers.</text>
</comment>
<comment type="interaction">
    <interactant intactId="EBI-10068189">
        <id>Q3V891</id>
    </interactant>
    <interactant intactId="EBI-9012326">
        <id>Q72AS4</id>
        <label>hysB</label>
    </interactant>
    <organismsDiffer>false</organismsDiffer>
    <experiments>2</experiments>
</comment>
<comment type="subcellular location">
    <subcellularLocation>
        <location evidence="1">Cytoplasm</location>
    </subcellularLocation>
</comment>
<comment type="similarity">
    <text evidence="1">Belongs to the PNP synthase family.</text>
</comment>
<dbReference type="EC" id="2.6.99.2" evidence="1"/>
<dbReference type="EMBL" id="AE017285">
    <property type="protein sequence ID" value="AAS96384.1"/>
    <property type="molecule type" value="Genomic_DNA"/>
</dbReference>
<dbReference type="RefSeq" id="WP_010939194.1">
    <property type="nucleotide sequence ID" value="NC_002937.3"/>
</dbReference>
<dbReference type="RefSeq" id="YP_011125.1">
    <property type="nucleotide sequence ID" value="NC_002937.3"/>
</dbReference>
<dbReference type="SMR" id="Q3V891"/>
<dbReference type="IntAct" id="Q3V891">
    <property type="interactions" value="1"/>
</dbReference>
<dbReference type="STRING" id="882.DVU_1908"/>
<dbReference type="PaxDb" id="882-DVU_1908"/>
<dbReference type="EnsemblBacteria" id="AAS96384">
    <property type="protein sequence ID" value="AAS96384"/>
    <property type="gene ID" value="DVU_1908"/>
</dbReference>
<dbReference type="KEGG" id="dvu:DVU_1908"/>
<dbReference type="PATRIC" id="fig|882.5.peg.1753"/>
<dbReference type="eggNOG" id="COG0854">
    <property type="taxonomic scope" value="Bacteria"/>
</dbReference>
<dbReference type="HOGENOM" id="CLU_074563_0_0_7"/>
<dbReference type="OrthoDB" id="9806590at2"/>
<dbReference type="PhylomeDB" id="Q3V891"/>
<dbReference type="UniPathway" id="UPA00244">
    <property type="reaction ID" value="UER00313"/>
</dbReference>
<dbReference type="Proteomes" id="UP000002194">
    <property type="component" value="Chromosome"/>
</dbReference>
<dbReference type="GO" id="GO:0005829">
    <property type="term" value="C:cytosol"/>
    <property type="evidence" value="ECO:0007669"/>
    <property type="project" value="TreeGrafter"/>
</dbReference>
<dbReference type="GO" id="GO:0033856">
    <property type="term" value="F:pyridoxine 5'-phosphate synthase activity"/>
    <property type="evidence" value="ECO:0007669"/>
    <property type="project" value="UniProtKB-EC"/>
</dbReference>
<dbReference type="GO" id="GO:0008615">
    <property type="term" value="P:pyridoxine biosynthetic process"/>
    <property type="evidence" value="ECO:0007669"/>
    <property type="project" value="UniProtKB-UniRule"/>
</dbReference>
<dbReference type="CDD" id="cd00003">
    <property type="entry name" value="PNPsynthase"/>
    <property type="match status" value="1"/>
</dbReference>
<dbReference type="Gene3D" id="3.20.20.70">
    <property type="entry name" value="Aldolase class I"/>
    <property type="match status" value="1"/>
</dbReference>
<dbReference type="HAMAP" id="MF_00279">
    <property type="entry name" value="PdxJ"/>
    <property type="match status" value="1"/>
</dbReference>
<dbReference type="InterPro" id="IPR013785">
    <property type="entry name" value="Aldolase_TIM"/>
</dbReference>
<dbReference type="InterPro" id="IPR004569">
    <property type="entry name" value="PyrdxlP_synth_PdxJ"/>
</dbReference>
<dbReference type="InterPro" id="IPR036130">
    <property type="entry name" value="Pyridoxine-5'_phos_synth"/>
</dbReference>
<dbReference type="NCBIfam" id="TIGR00559">
    <property type="entry name" value="pdxJ"/>
    <property type="match status" value="1"/>
</dbReference>
<dbReference type="NCBIfam" id="NF003625">
    <property type="entry name" value="PRK05265.1-3"/>
    <property type="match status" value="1"/>
</dbReference>
<dbReference type="NCBIfam" id="NF003627">
    <property type="entry name" value="PRK05265.1-5"/>
    <property type="match status" value="1"/>
</dbReference>
<dbReference type="PANTHER" id="PTHR30456">
    <property type="entry name" value="PYRIDOXINE 5'-PHOSPHATE SYNTHASE"/>
    <property type="match status" value="1"/>
</dbReference>
<dbReference type="PANTHER" id="PTHR30456:SF0">
    <property type="entry name" value="PYRIDOXINE 5'-PHOSPHATE SYNTHASE"/>
    <property type="match status" value="1"/>
</dbReference>
<dbReference type="Pfam" id="PF03740">
    <property type="entry name" value="PdxJ"/>
    <property type="match status" value="1"/>
</dbReference>
<dbReference type="SUPFAM" id="SSF63892">
    <property type="entry name" value="Pyridoxine 5'-phosphate synthase"/>
    <property type="match status" value="1"/>
</dbReference>
<evidence type="ECO:0000255" key="1">
    <source>
        <dbReference type="HAMAP-Rule" id="MF_00279"/>
    </source>
</evidence>
<gene>
    <name evidence="1" type="primary">pdxJ</name>
    <name type="ordered locus">DVU_1908</name>
</gene>
<organism>
    <name type="scientific">Nitratidesulfovibrio vulgaris (strain ATCC 29579 / DSM 644 / CCUG 34227 / NCIMB 8303 / VKM B-1760 / Hildenborough)</name>
    <name type="common">Desulfovibrio vulgaris</name>
    <dbReference type="NCBI Taxonomy" id="882"/>
    <lineage>
        <taxon>Bacteria</taxon>
        <taxon>Pseudomonadati</taxon>
        <taxon>Thermodesulfobacteriota</taxon>
        <taxon>Desulfovibrionia</taxon>
        <taxon>Desulfovibrionales</taxon>
        <taxon>Desulfovibrionaceae</taxon>
        <taxon>Nitratidesulfovibrio</taxon>
    </lineage>
</organism>